<proteinExistence type="inferred from homology"/>
<keyword id="KW-0131">Cell cycle</keyword>
<keyword id="KW-0132">Cell division</keyword>
<keyword id="KW-0342">GTP-binding</keyword>
<keyword id="KW-0460">Magnesium</keyword>
<keyword id="KW-0479">Metal-binding</keyword>
<keyword id="KW-0547">Nucleotide-binding</keyword>
<keyword id="KW-1185">Reference proteome</keyword>
<keyword id="KW-0717">Septation</keyword>
<reference key="1">
    <citation type="journal article" date="2007" name="PLoS Genet.">
        <title>Being pathogenic, plastic, and sexual while living with a nearly minimal bacterial genome.</title>
        <authorList>
            <person name="Sirand-Pugnet P."/>
            <person name="Lartigue C."/>
            <person name="Marenda M."/>
            <person name="Jacob D."/>
            <person name="Barre A."/>
            <person name="Barbe V."/>
            <person name="Schenowitz C."/>
            <person name="Mangenot S."/>
            <person name="Couloux A."/>
            <person name="Segurens B."/>
            <person name="de Daruvar A."/>
            <person name="Blanchard A."/>
            <person name="Citti C."/>
        </authorList>
    </citation>
    <scope>NUCLEOTIDE SEQUENCE [LARGE SCALE GENOMIC DNA]</scope>
    <source>
        <strain>NCTC 10123 / CIP 59.7 / PG2</strain>
    </source>
</reference>
<evidence type="ECO:0000255" key="1">
    <source>
        <dbReference type="HAMAP-Rule" id="MF_00321"/>
    </source>
</evidence>
<accession>A5IXT1</accession>
<dbReference type="EMBL" id="CU179680">
    <property type="protein sequence ID" value="CAL58840.1"/>
    <property type="molecule type" value="Genomic_DNA"/>
</dbReference>
<dbReference type="RefSeq" id="WP_011949322.1">
    <property type="nucleotide sequence ID" value="NC_009497.1"/>
</dbReference>
<dbReference type="SMR" id="A5IXT1"/>
<dbReference type="STRING" id="347257.MAG1420"/>
<dbReference type="GeneID" id="93357907"/>
<dbReference type="KEGG" id="maa:MAG1420"/>
<dbReference type="HOGENOM" id="CLU_033732_3_2_14"/>
<dbReference type="Proteomes" id="UP000007065">
    <property type="component" value="Chromosome"/>
</dbReference>
<dbReference type="GO" id="GO:0005829">
    <property type="term" value="C:cytosol"/>
    <property type="evidence" value="ECO:0007669"/>
    <property type="project" value="TreeGrafter"/>
</dbReference>
<dbReference type="GO" id="GO:0005525">
    <property type="term" value="F:GTP binding"/>
    <property type="evidence" value="ECO:0007669"/>
    <property type="project" value="UniProtKB-UniRule"/>
</dbReference>
<dbReference type="GO" id="GO:0046872">
    <property type="term" value="F:metal ion binding"/>
    <property type="evidence" value="ECO:0007669"/>
    <property type="project" value="UniProtKB-KW"/>
</dbReference>
<dbReference type="GO" id="GO:0000917">
    <property type="term" value="P:division septum assembly"/>
    <property type="evidence" value="ECO:0007669"/>
    <property type="project" value="UniProtKB-KW"/>
</dbReference>
<dbReference type="CDD" id="cd01876">
    <property type="entry name" value="YihA_EngB"/>
    <property type="match status" value="1"/>
</dbReference>
<dbReference type="Gene3D" id="3.40.50.300">
    <property type="entry name" value="P-loop containing nucleotide triphosphate hydrolases"/>
    <property type="match status" value="1"/>
</dbReference>
<dbReference type="HAMAP" id="MF_00321">
    <property type="entry name" value="GTPase_EngB"/>
    <property type="match status" value="1"/>
</dbReference>
<dbReference type="InterPro" id="IPR030393">
    <property type="entry name" value="G_ENGB_dom"/>
</dbReference>
<dbReference type="InterPro" id="IPR006073">
    <property type="entry name" value="GTP-bd"/>
</dbReference>
<dbReference type="InterPro" id="IPR019987">
    <property type="entry name" value="GTP-bd_ribosome_bio_YsxC"/>
</dbReference>
<dbReference type="InterPro" id="IPR027417">
    <property type="entry name" value="P-loop_NTPase"/>
</dbReference>
<dbReference type="NCBIfam" id="TIGR03598">
    <property type="entry name" value="GTPase_YsxC"/>
    <property type="match status" value="1"/>
</dbReference>
<dbReference type="PANTHER" id="PTHR11649:SF13">
    <property type="entry name" value="ENGB-TYPE G DOMAIN-CONTAINING PROTEIN"/>
    <property type="match status" value="1"/>
</dbReference>
<dbReference type="PANTHER" id="PTHR11649">
    <property type="entry name" value="MSS1/TRME-RELATED GTP-BINDING PROTEIN"/>
    <property type="match status" value="1"/>
</dbReference>
<dbReference type="Pfam" id="PF01926">
    <property type="entry name" value="MMR_HSR1"/>
    <property type="match status" value="1"/>
</dbReference>
<dbReference type="SUPFAM" id="SSF52540">
    <property type="entry name" value="P-loop containing nucleoside triphosphate hydrolases"/>
    <property type="match status" value="1"/>
</dbReference>
<dbReference type="PROSITE" id="PS51706">
    <property type="entry name" value="G_ENGB"/>
    <property type="match status" value="1"/>
</dbReference>
<protein>
    <recommendedName>
        <fullName evidence="1">Probable GTP-binding protein EngB</fullName>
    </recommendedName>
</protein>
<name>ENGB_MYCAP</name>
<sequence length="194" mass="22578">MWKFVKSALKKETWVKCEDCIQICFWGRSNVGKSSLLNALVNQKISYVSKQPGRTQFINYFQEENRFIVDLPGYGYAQLSKEKIEEMNYWISAFLKDDKCTKVMFLLIDSRTGITKIDLEKLAFLKAINLPIHLIYTKIDKLNQKEKSALVKKHNEYLDSNLLNESTNSFLVSSTNKIGLDDLVLFIEENIFKK</sequence>
<gene>
    <name evidence="1" type="primary">engB</name>
    <name type="ordered locus">MAG1420</name>
</gene>
<organism>
    <name type="scientific">Mycoplasmopsis agalactiae (strain NCTC 10123 / CIP 59.7 / PG2)</name>
    <name type="common">Mycoplasma agalactiae</name>
    <dbReference type="NCBI Taxonomy" id="347257"/>
    <lineage>
        <taxon>Bacteria</taxon>
        <taxon>Bacillati</taxon>
        <taxon>Mycoplasmatota</taxon>
        <taxon>Mycoplasmoidales</taxon>
        <taxon>Metamycoplasmataceae</taxon>
        <taxon>Mycoplasmopsis</taxon>
    </lineage>
</organism>
<comment type="function">
    <text evidence="1">Necessary for normal cell division and for the maintenance of normal septation.</text>
</comment>
<comment type="cofactor">
    <cofactor evidence="1">
        <name>Mg(2+)</name>
        <dbReference type="ChEBI" id="CHEBI:18420"/>
    </cofactor>
</comment>
<comment type="similarity">
    <text evidence="1">Belongs to the TRAFAC class TrmE-Era-EngA-EngB-Septin-like GTPase superfamily. EngB GTPase family.</text>
</comment>
<feature type="chain" id="PRO_1000115987" description="Probable GTP-binding protein EngB">
    <location>
        <begin position="1"/>
        <end position="194"/>
    </location>
</feature>
<feature type="domain" description="EngB-type G" evidence="1">
    <location>
        <begin position="19"/>
        <end position="193"/>
    </location>
</feature>
<feature type="binding site" evidence="1">
    <location>
        <begin position="27"/>
        <end position="34"/>
    </location>
    <ligand>
        <name>GTP</name>
        <dbReference type="ChEBI" id="CHEBI:37565"/>
    </ligand>
</feature>
<feature type="binding site" evidence="1">
    <location>
        <position position="34"/>
    </location>
    <ligand>
        <name>Mg(2+)</name>
        <dbReference type="ChEBI" id="CHEBI:18420"/>
    </ligand>
</feature>
<feature type="binding site" evidence="1">
    <location>
        <begin position="53"/>
        <end position="57"/>
    </location>
    <ligand>
        <name>GTP</name>
        <dbReference type="ChEBI" id="CHEBI:37565"/>
    </ligand>
</feature>
<feature type="binding site" evidence="1">
    <location>
        <position position="55"/>
    </location>
    <ligand>
        <name>Mg(2+)</name>
        <dbReference type="ChEBI" id="CHEBI:18420"/>
    </ligand>
</feature>
<feature type="binding site" evidence="1">
    <location>
        <begin position="70"/>
        <end position="73"/>
    </location>
    <ligand>
        <name>GTP</name>
        <dbReference type="ChEBI" id="CHEBI:37565"/>
    </ligand>
</feature>
<feature type="binding site" evidence="1">
    <location>
        <begin position="137"/>
        <end position="140"/>
    </location>
    <ligand>
        <name>GTP</name>
        <dbReference type="ChEBI" id="CHEBI:37565"/>
    </ligand>
</feature>
<feature type="binding site" evidence="1">
    <location>
        <begin position="172"/>
        <end position="174"/>
    </location>
    <ligand>
        <name>GTP</name>
        <dbReference type="ChEBI" id="CHEBI:37565"/>
    </ligand>
</feature>